<accession>O02722</accession>
<name>TIMP1_HORSE</name>
<evidence type="ECO:0000250" key="1"/>
<evidence type="ECO:0000250" key="2">
    <source>
        <dbReference type="UniProtKB" id="P01033"/>
    </source>
</evidence>
<evidence type="ECO:0000250" key="3">
    <source>
        <dbReference type="UniProtKB" id="P16035"/>
    </source>
</evidence>
<evidence type="ECO:0000255" key="4"/>
<evidence type="ECO:0000255" key="5">
    <source>
        <dbReference type="PROSITE-ProRule" id="PRU00295"/>
    </source>
</evidence>
<evidence type="ECO:0000305" key="6"/>
<dbReference type="EMBL" id="U95039">
    <property type="protein sequence ID" value="AAB53735.1"/>
    <property type="molecule type" value="mRNA"/>
</dbReference>
<dbReference type="RefSeq" id="NP_001075984.1">
    <property type="nucleotide sequence ID" value="NM_001082515.3"/>
</dbReference>
<dbReference type="SMR" id="O02722"/>
<dbReference type="FunCoup" id="O02722">
    <property type="interactions" value="76"/>
</dbReference>
<dbReference type="STRING" id="9796.ENSECAP00000011965"/>
<dbReference type="GlyCosmos" id="O02722">
    <property type="glycosylation" value="2 sites, No reported glycans"/>
</dbReference>
<dbReference type="PaxDb" id="9796-ENSECAP00000011965"/>
<dbReference type="Ensembl" id="ENSECAT00000014937.2">
    <property type="protein sequence ID" value="ENSECAP00000011965.2"/>
    <property type="gene ID" value="ENSECAG00000014259.3"/>
</dbReference>
<dbReference type="GeneID" id="100034220"/>
<dbReference type="KEGG" id="ecb:100034220"/>
<dbReference type="CTD" id="7076"/>
<dbReference type="VGNC" id="VGNC:59009">
    <property type="gene designation" value="TIMP1"/>
</dbReference>
<dbReference type="GeneTree" id="ENSGT00940000161081"/>
<dbReference type="InParanoid" id="O02722"/>
<dbReference type="OMA" id="LWTDQFL"/>
<dbReference type="OrthoDB" id="6041373at2759"/>
<dbReference type="Proteomes" id="UP000002281">
    <property type="component" value="Chromosome X"/>
</dbReference>
<dbReference type="Bgee" id="ENSECAG00000014259">
    <property type="expression patterns" value="Expressed in articular cartilage of joint and 23 other cell types or tissues"/>
</dbReference>
<dbReference type="GO" id="GO:0031012">
    <property type="term" value="C:extracellular matrix"/>
    <property type="evidence" value="ECO:0000318"/>
    <property type="project" value="GO_Central"/>
</dbReference>
<dbReference type="GO" id="GO:0005615">
    <property type="term" value="C:extracellular space"/>
    <property type="evidence" value="ECO:0000250"/>
    <property type="project" value="UniProtKB"/>
</dbReference>
<dbReference type="GO" id="GO:0005125">
    <property type="term" value="F:cytokine activity"/>
    <property type="evidence" value="ECO:0000250"/>
    <property type="project" value="UniProtKB"/>
</dbReference>
<dbReference type="GO" id="GO:0008083">
    <property type="term" value="F:growth factor activity"/>
    <property type="evidence" value="ECO:0007669"/>
    <property type="project" value="UniProtKB-KW"/>
</dbReference>
<dbReference type="GO" id="GO:0046872">
    <property type="term" value="F:metal ion binding"/>
    <property type="evidence" value="ECO:0007669"/>
    <property type="project" value="UniProtKB-KW"/>
</dbReference>
<dbReference type="GO" id="GO:0008191">
    <property type="term" value="F:metalloendopeptidase inhibitor activity"/>
    <property type="evidence" value="ECO:0000250"/>
    <property type="project" value="UniProtKB"/>
</dbReference>
<dbReference type="GO" id="GO:0071492">
    <property type="term" value="P:cellular response to UV-A"/>
    <property type="evidence" value="ECO:0000250"/>
    <property type="project" value="UniProtKB"/>
</dbReference>
<dbReference type="GO" id="GO:0043086">
    <property type="term" value="P:negative regulation of catalytic activity"/>
    <property type="evidence" value="ECO:0000250"/>
    <property type="project" value="UniProtKB"/>
</dbReference>
<dbReference type="GO" id="GO:0010951">
    <property type="term" value="P:negative regulation of endopeptidase activity"/>
    <property type="evidence" value="ECO:0000250"/>
    <property type="project" value="UniProtKB"/>
</dbReference>
<dbReference type="GO" id="GO:0051045">
    <property type="term" value="P:negative regulation of membrane protein ectodomain proteolysis"/>
    <property type="evidence" value="ECO:0000318"/>
    <property type="project" value="GO_Central"/>
</dbReference>
<dbReference type="GO" id="GO:0008284">
    <property type="term" value="P:positive regulation of cell population proliferation"/>
    <property type="evidence" value="ECO:0000250"/>
    <property type="project" value="UniProtKB"/>
</dbReference>
<dbReference type="GO" id="GO:2001044">
    <property type="term" value="P:regulation of integrin-mediated signaling pathway"/>
    <property type="evidence" value="ECO:0000250"/>
    <property type="project" value="UniProtKB"/>
</dbReference>
<dbReference type="GO" id="GO:0034097">
    <property type="term" value="P:response to cytokine"/>
    <property type="evidence" value="ECO:0000318"/>
    <property type="project" value="GO_Central"/>
</dbReference>
<dbReference type="GO" id="GO:0009725">
    <property type="term" value="P:response to hormone"/>
    <property type="evidence" value="ECO:0000318"/>
    <property type="project" value="GO_Central"/>
</dbReference>
<dbReference type="FunFam" id="2.40.50.120:FF:000016">
    <property type="entry name" value="Metalloproteinase inhibitor 1"/>
    <property type="match status" value="1"/>
</dbReference>
<dbReference type="FunFam" id="3.90.370.10:FF:000001">
    <property type="entry name" value="Metalloproteinase inhibitor 3"/>
    <property type="match status" value="1"/>
</dbReference>
<dbReference type="Gene3D" id="2.40.50.120">
    <property type="match status" value="1"/>
</dbReference>
<dbReference type="Gene3D" id="3.90.370.10">
    <property type="entry name" value="Tissue inhibitor of metalloproteinase-1. Chain B, domain 1"/>
    <property type="match status" value="1"/>
</dbReference>
<dbReference type="InterPro" id="IPR001134">
    <property type="entry name" value="Netrin_domain"/>
</dbReference>
<dbReference type="InterPro" id="IPR001820">
    <property type="entry name" value="TIMP"/>
</dbReference>
<dbReference type="InterPro" id="IPR008993">
    <property type="entry name" value="TIMP-like_OB-fold"/>
</dbReference>
<dbReference type="InterPro" id="IPR027465">
    <property type="entry name" value="TIMP_C"/>
</dbReference>
<dbReference type="InterPro" id="IPR030490">
    <property type="entry name" value="TIMP_CS"/>
</dbReference>
<dbReference type="PANTHER" id="PTHR11844">
    <property type="entry name" value="METALLOPROTEASE INHIBITOR"/>
    <property type="match status" value="1"/>
</dbReference>
<dbReference type="PANTHER" id="PTHR11844:SF20">
    <property type="entry name" value="METALLOPROTEINASE INHIBITOR 1"/>
    <property type="match status" value="1"/>
</dbReference>
<dbReference type="Pfam" id="PF00965">
    <property type="entry name" value="TIMP"/>
    <property type="match status" value="1"/>
</dbReference>
<dbReference type="SMART" id="SM00206">
    <property type="entry name" value="NTR"/>
    <property type="match status" value="1"/>
</dbReference>
<dbReference type="SUPFAM" id="SSF50242">
    <property type="entry name" value="TIMP-like"/>
    <property type="match status" value="1"/>
</dbReference>
<dbReference type="PROSITE" id="PS50189">
    <property type="entry name" value="NTR"/>
    <property type="match status" value="1"/>
</dbReference>
<dbReference type="PROSITE" id="PS00288">
    <property type="entry name" value="TIMP"/>
    <property type="match status" value="1"/>
</dbReference>
<feature type="signal peptide" evidence="1">
    <location>
        <begin position="1"/>
        <end position="23"/>
    </location>
</feature>
<feature type="chain" id="PRO_0000034322" description="Metalloproteinase inhibitor 1">
    <location>
        <begin position="24"/>
        <end position="207"/>
    </location>
</feature>
<feature type="domain" description="NTR" evidence="5">
    <location>
        <begin position="24"/>
        <end position="147"/>
    </location>
</feature>
<feature type="region of interest" description="Involved in metalloproteinase-binding" evidence="3">
    <location>
        <begin position="24"/>
        <end position="27"/>
    </location>
</feature>
<feature type="region of interest" description="Involved in metalloproteinase-binding" evidence="3">
    <location>
        <begin position="90"/>
        <end position="91"/>
    </location>
</feature>
<feature type="binding site" evidence="3">
    <location>
        <position position="24"/>
    </location>
    <ligand>
        <name>Zn(2+)</name>
        <dbReference type="ChEBI" id="CHEBI:29105"/>
        <note>ligand shared with metalloproteinase partner</note>
    </ligand>
</feature>
<feature type="modified residue" description="Phosphoserine; by FAM20C" evidence="2">
    <location>
        <position position="178"/>
    </location>
</feature>
<feature type="glycosylation site" description="N-linked (GlcNAc...) asparagine" evidence="4">
    <location>
        <position position="53"/>
    </location>
</feature>
<feature type="glycosylation site" description="N-linked (GlcNAc...) asparagine" evidence="4">
    <location>
        <position position="101"/>
    </location>
</feature>
<feature type="disulfide bond" evidence="5">
    <location>
        <begin position="24"/>
        <end position="93"/>
    </location>
</feature>
<feature type="disulfide bond" evidence="5">
    <location>
        <begin position="26"/>
        <end position="122"/>
    </location>
</feature>
<feature type="disulfide bond" evidence="5">
    <location>
        <begin position="36"/>
        <end position="147"/>
    </location>
</feature>
<feature type="disulfide bond" evidence="5">
    <location>
        <begin position="150"/>
        <end position="197"/>
    </location>
</feature>
<feature type="disulfide bond" evidence="5">
    <location>
        <begin position="155"/>
        <end position="160"/>
    </location>
</feature>
<feature type="disulfide bond" evidence="5">
    <location>
        <begin position="168"/>
        <end position="189"/>
    </location>
</feature>
<reference key="1">
    <citation type="journal article" date="1998" name="Am. J. Vet. Res.">
        <title>Molecular characteristics of equine stromelysin and the tissue inhibitor of metalloproteinase 1.</title>
        <authorList>
            <person name="Richardson D.W."/>
            <person name="Dodge G.R."/>
        </authorList>
    </citation>
    <scope>NUCLEOTIDE SEQUENCE [MRNA]</scope>
    <source>
        <tissue>Cartilage</tissue>
    </source>
</reference>
<organism>
    <name type="scientific">Equus caballus</name>
    <name type="common">Horse</name>
    <dbReference type="NCBI Taxonomy" id="9796"/>
    <lineage>
        <taxon>Eukaryota</taxon>
        <taxon>Metazoa</taxon>
        <taxon>Chordata</taxon>
        <taxon>Craniata</taxon>
        <taxon>Vertebrata</taxon>
        <taxon>Euteleostomi</taxon>
        <taxon>Mammalia</taxon>
        <taxon>Eutheria</taxon>
        <taxon>Laurasiatheria</taxon>
        <taxon>Perissodactyla</taxon>
        <taxon>Equidae</taxon>
        <taxon>Equus</taxon>
    </lineage>
</organism>
<gene>
    <name type="primary">TIMP1</name>
</gene>
<proteinExistence type="evidence at transcript level"/>
<comment type="function">
    <text evidence="1">Metalloproteinase inhibitor that functions by forming one to one complexes with target metalloproteinases, such as collagenases, and irreversibly inactivates them by binding to their catalytic zinc cofactor. Acts on MMP1, MMP2, MMP3, MMP7, MMP8, MMP9, MMP10, MMP11, MMP12, MMP13 and MMP16. Does not act on MMP14. Also functions as a growth factor that regulates cell differentiation, migration and cell death and activates cellular signaling cascades via CD63 and ITGB1. Plays a role in integrin signaling (By similarity).</text>
</comment>
<comment type="subunit">
    <text evidence="1">Interacts with MMP1, MMP3, MMP10 and MMP13, but has only very low affinity for MMP14. Interacts with CD63; identified in a complex with CD63 and ITGB1 (By similarity).</text>
</comment>
<comment type="subcellular location">
    <subcellularLocation>
        <location evidence="1">Secreted</location>
    </subcellularLocation>
</comment>
<comment type="PTM">
    <text evidence="1">The activity of TIMP1 is dependent on the presence of disulfide bonds.</text>
</comment>
<comment type="PTM">
    <text evidence="1">N-glycosylated.</text>
</comment>
<comment type="similarity">
    <text evidence="6">Belongs to the protease inhibitor I35 (TIMP) family.</text>
</comment>
<protein>
    <recommendedName>
        <fullName>Metalloproteinase inhibitor 1</fullName>
    </recommendedName>
    <alternativeName>
        <fullName>Tissue inhibitor of metalloproteinases 1</fullName>
        <shortName>TIMP-1</shortName>
    </alternativeName>
</protein>
<keyword id="KW-1015">Disulfide bond</keyword>
<keyword id="KW-0325">Glycoprotein</keyword>
<keyword id="KW-0339">Growth factor</keyword>
<keyword id="KW-0479">Metal-binding</keyword>
<keyword id="KW-0481">Metalloenzyme inhibitor</keyword>
<keyword id="KW-0483">Metalloprotease inhibitor</keyword>
<keyword id="KW-0597">Phosphoprotein</keyword>
<keyword id="KW-0646">Protease inhibitor</keyword>
<keyword id="KW-1185">Reference proteome</keyword>
<keyword id="KW-0964">Secreted</keyword>
<keyword id="KW-0732">Signal</keyword>
<keyword id="KW-0862">Zinc</keyword>
<sequence length="207" mass="23046">MAPFAPLVSGILLLLWLTAPSRACTCVPPHPQTAFCSSEFVIRAKFVGTSEVNQTTLQRRYEIKMTKMFKGFSALGDAPDTWFVYTPAMESLCGYFHRSENRSEEFLIAGQLLDEKLYITTCSFVAPWNSLSSAQRQGFTKTYAAGCGECSVFPCSSIPCKLQSDTDCLWTDQLLTGSDKGFQSRYLACLPREPGLCTWQSLRPRTA</sequence>